<evidence type="ECO:0000255" key="1">
    <source>
        <dbReference type="HAMAP-Rule" id="MF_01393"/>
    </source>
</evidence>
<reference key="1">
    <citation type="submission" date="2008-06" db="EMBL/GenBank/DDBJ databases">
        <title>Complete sequence of Chlorobaculum parvum NCIB 8327.</title>
        <authorList>
            <consortium name="US DOE Joint Genome Institute"/>
            <person name="Lucas S."/>
            <person name="Copeland A."/>
            <person name="Lapidus A."/>
            <person name="Glavina del Rio T."/>
            <person name="Dalin E."/>
            <person name="Tice H."/>
            <person name="Bruce D."/>
            <person name="Goodwin L."/>
            <person name="Pitluck S."/>
            <person name="Schmutz J."/>
            <person name="Larimer F."/>
            <person name="Land M."/>
            <person name="Hauser L."/>
            <person name="Kyrpides N."/>
            <person name="Mikhailova N."/>
            <person name="Zhao F."/>
            <person name="Li T."/>
            <person name="Liu Z."/>
            <person name="Overmann J."/>
            <person name="Bryant D.A."/>
            <person name="Richardson P."/>
        </authorList>
    </citation>
    <scope>NUCLEOTIDE SEQUENCE [LARGE SCALE GENOMIC DNA]</scope>
    <source>
        <strain>DSM 263 / NCIMB 8327</strain>
    </source>
</reference>
<sequence length="226" mass="24587">MHLSSDEVVLWQSGFLKLNLTIVTTWAVMLLLAGGSWLITRRLSTGITISRWQSVLEIIVTMARRQIGEVGLQKPEKYLPFIATLFLFIATANLCTVIPGYEPPTGSLSTTAALALSVFIAVPLFGIAESGLVGYLKTYAEPTPIMLPFNIVGELTRTMALAVRLFGNMMSGDMILVILLTISPLVFPVLMNILGLLTGMVQAYIFSILATVYIAAATRTREKSTS</sequence>
<accession>B3QNH3</accession>
<name>ATP61_CHLP8</name>
<proteinExistence type="inferred from homology"/>
<protein>
    <recommendedName>
        <fullName evidence="1">ATP synthase subunit a 1</fullName>
    </recommendedName>
    <alternativeName>
        <fullName evidence="1">ATP synthase F0 sector subunit a 1</fullName>
    </alternativeName>
    <alternativeName>
        <fullName evidence="1">F-ATPase subunit 6 1</fullName>
    </alternativeName>
</protein>
<dbReference type="EMBL" id="CP001099">
    <property type="protein sequence ID" value="ACF11476.1"/>
    <property type="molecule type" value="Genomic_DNA"/>
</dbReference>
<dbReference type="RefSeq" id="WP_012502309.1">
    <property type="nucleotide sequence ID" value="NC_011027.1"/>
</dbReference>
<dbReference type="SMR" id="B3QNH3"/>
<dbReference type="STRING" id="517417.Cpar_1068"/>
<dbReference type="KEGG" id="cpc:Cpar_1068"/>
<dbReference type="eggNOG" id="COG0356">
    <property type="taxonomic scope" value="Bacteria"/>
</dbReference>
<dbReference type="HOGENOM" id="CLU_041018_2_5_10"/>
<dbReference type="OrthoDB" id="9789241at2"/>
<dbReference type="Proteomes" id="UP000008811">
    <property type="component" value="Chromosome"/>
</dbReference>
<dbReference type="GO" id="GO:0005886">
    <property type="term" value="C:plasma membrane"/>
    <property type="evidence" value="ECO:0007669"/>
    <property type="project" value="UniProtKB-SubCell"/>
</dbReference>
<dbReference type="GO" id="GO:0045259">
    <property type="term" value="C:proton-transporting ATP synthase complex"/>
    <property type="evidence" value="ECO:0007669"/>
    <property type="project" value="UniProtKB-KW"/>
</dbReference>
<dbReference type="GO" id="GO:0046933">
    <property type="term" value="F:proton-transporting ATP synthase activity, rotational mechanism"/>
    <property type="evidence" value="ECO:0007669"/>
    <property type="project" value="UniProtKB-UniRule"/>
</dbReference>
<dbReference type="GO" id="GO:0042777">
    <property type="term" value="P:proton motive force-driven plasma membrane ATP synthesis"/>
    <property type="evidence" value="ECO:0007669"/>
    <property type="project" value="TreeGrafter"/>
</dbReference>
<dbReference type="CDD" id="cd00310">
    <property type="entry name" value="ATP-synt_Fo_a_6"/>
    <property type="match status" value="1"/>
</dbReference>
<dbReference type="Gene3D" id="1.20.120.220">
    <property type="entry name" value="ATP synthase, F0 complex, subunit A"/>
    <property type="match status" value="1"/>
</dbReference>
<dbReference type="HAMAP" id="MF_01393">
    <property type="entry name" value="ATP_synth_a_bact"/>
    <property type="match status" value="1"/>
</dbReference>
<dbReference type="InterPro" id="IPR017692">
    <property type="entry name" value="Alt_ATP_synth_F0_Asu"/>
</dbReference>
<dbReference type="InterPro" id="IPR045082">
    <property type="entry name" value="ATP_syn_F0_a_bact/chloroplast"/>
</dbReference>
<dbReference type="InterPro" id="IPR000568">
    <property type="entry name" value="ATP_synth_F0_asu"/>
</dbReference>
<dbReference type="InterPro" id="IPR023011">
    <property type="entry name" value="ATP_synth_F0_asu_AS"/>
</dbReference>
<dbReference type="InterPro" id="IPR035908">
    <property type="entry name" value="F0_ATP_A_sf"/>
</dbReference>
<dbReference type="NCBIfam" id="TIGR03306">
    <property type="entry name" value="altF1_A"/>
    <property type="match status" value="1"/>
</dbReference>
<dbReference type="NCBIfam" id="TIGR01131">
    <property type="entry name" value="ATP_synt_6_or_A"/>
    <property type="match status" value="1"/>
</dbReference>
<dbReference type="NCBIfam" id="NF004481">
    <property type="entry name" value="PRK05815.2-3"/>
    <property type="match status" value="1"/>
</dbReference>
<dbReference type="PANTHER" id="PTHR42823">
    <property type="entry name" value="ATP SYNTHASE SUBUNIT A, CHLOROPLASTIC"/>
    <property type="match status" value="1"/>
</dbReference>
<dbReference type="PANTHER" id="PTHR42823:SF3">
    <property type="entry name" value="ATP SYNTHASE SUBUNIT A, CHLOROPLASTIC"/>
    <property type="match status" value="1"/>
</dbReference>
<dbReference type="Pfam" id="PF00119">
    <property type="entry name" value="ATP-synt_A"/>
    <property type="match status" value="1"/>
</dbReference>
<dbReference type="PRINTS" id="PR00123">
    <property type="entry name" value="ATPASEA"/>
</dbReference>
<dbReference type="SUPFAM" id="SSF81336">
    <property type="entry name" value="F1F0 ATP synthase subunit A"/>
    <property type="match status" value="1"/>
</dbReference>
<dbReference type="PROSITE" id="PS00449">
    <property type="entry name" value="ATPASE_A"/>
    <property type="match status" value="1"/>
</dbReference>
<keyword id="KW-0066">ATP synthesis</keyword>
<keyword id="KW-0997">Cell inner membrane</keyword>
<keyword id="KW-1003">Cell membrane</keyword>
<keyword id="KW-0138">CF(0)</keyword>
<keyword id="KW-0375">Hydrogen ion transport</keyword>
<keyword id="KW-0406">Ion transport</keyword>
<keyword id="KW-0472">Membrane</keyword>
<keyword id="KW-0812">Transmembrane</keyword>
<keyword id="KW-1133">Transmembrane helix</keyword>
<keyword id="KW-0813">Transport</keyword>
<gene>
    <name evidence="1" type="primary">atpB1</name>
    <name type="ordered locus">Cpar_1068</name>
</gene>
<comment type="function">
    <text evidence="1">Key component of the proton channel; it plays a direct role in the translocation of protons across the membrane.</text>
</comment>
<comment type="subunit">
    <text evidence="1">F-type ATPases have 2 components, CF(1) - the catalytic core - and CF(0) - the membrane proton channel. CF(1) has five subunits: alpha(3), beta(3), gamma(1), delta(1), epsilon(1). CF(0) has four main subunits: a, b, b' and c.</text>
</comment>
<comment type="subcellular location">
    <subcellularLocation>
        <location evidence="1">Cell inner membrane</location>
        <topology evidence="1">Multi-pass membrane protein</topology>
    </subcellularLocation>
</comment>
<comment type="similarity">
    <text evidence="1">Belongs to the ATPase A chain family.</text>
</comment>
<organism>
    <name type="scientific">Chlorobaculum parvum (strain DSM 263 / NCIMB 8327)</name>
    <name type="common">Chlorobium vibrioforme subsp. thiosulfatophilum</name>
    <dbReference type="NCBI Taxonomy" id="517417"/>
    <lineage>
        <taxon>Bacteria</taxon>
        <taxon>Pseudomonadati</taxon>
        <taxon>Chlorobiota</taxon>
        <taxon>Chlorobiia</taxon>
        <taxon>Chlorobiales</taxon>
        <taxon>Chlorobiaceae</taxon>
        <taxon>Chlorobaculum</taxon>
    </lineage>
</organism>
<feature type="chain" id="PRO_0000362269" description="ATP synthase subunit a 1">
    <location>
        <begin position="1"/>
        <end position="226"/>
    </location>
</feature>
<feature type="transmembrane region" description="Helical" evidence="1">
    <location>
        <begin position="20"/>
        <end position="40"/>
    </location>
</feature>
<feature type="transmembrane region" description="Helical" evidence="1">
    <location>
        <begin position="78"/>
        <end position="98"/>
    </location>
</feature>
<feature type="transmembrane region" description="Helical" evidence="1">
    <location>
        <begin position="113"/>
        <end position="133"/>
    </location>
</feature>
<feature type="transmembrane region" description="Helical" evidence="1">
    <location>
        <begin position="174"/>
        <end position="194"/>
    </location>
</feature>
<feature type="transmembrane region" description="Helical" evidence="1">
    <location>
        <begin position="196"/>
        <end position="216"/>
    </location>
</feature>